<dbReference type="EC" id="4.3.3.7" evidence="1"/>
<dbReference type="EMBL" id="AY596297">
    <property type="protein sequence ID" value="AAV45268.1"/>
    <property type="molecule type" value="Genomic_DNA"/>
</dbReference>
<dbReference type="RefSeq" id="WP_004962963.1">
    <property type="nucleotide sequence ID" value="NZ_CP039138.1"/>
</dbReference>
<dbReference type="SMR" id="Q5V5D4"/>
<dbReference type="STRING" id="272569.rrnAC0207"/>
<dbReference type="PaxDb" id="272569-rrnAC0207"/>
<dbReference type="EnsemblBacteria" id="AAV45268">
    <property type="protein sequence ID" value="AAV45268"/>
    <property type="gene ID" value="rrnAC0207"/>
</dbReference>
<dbReference type="GeneID" id="64823041"/>
<dbReference type="KEGG" id="hma:rrnAC0207"/>
<dbReference type="PATRIC" id="fig|272569.17.peg.1000"/>
<dbReference type="eggNOG" id="arCOG04172">
    <property type="taxonomic scope" value="Archaea"/>
</dbReference>
<dbReference type="HOGENOM" id="CLU_049343_5_1_2"/>
<dbReference type="UniPathway" id="UPA00034">
    <property type="reaction ID" value="UER00017"/>
</dbReference>
<dbReference type="Proteomes" id="UP000001169">
    <property type="component" value="Chromosome I"/>
</dbReference>
<dbReference type="GO" id="GO:0005737">
    <property type="term" value="C:cytoplasm"/>
    <property type="evidence" value="ECO:0007669"/>
    <property type="project" value="UniProtKB-SubCell"/>
</dbReference>
<dbReference type="GO" id="GO:0008675">
    <property type="term" value="F:2-dehydro-3-deoxy-phosphogluconate aldolase activity"/>
    <property type="evidence" value="ECO:0007669"/>
    <property type="project" value="UniProtKB-ARBA"/>
</dbReference>
<dbReference type="GO" id="GO:0008840">
    <property type="term" value="F:4-hydroxy-tetrahydrodipicolinate synthase activity"/>
    <property type="evidence" value="ECO:0007669"/>
    <property type="project" value="UniProtKB-UniRule"/>
</dbReference>
<dbReference type="GO" id="GO:0019877">
    <property type="term" value="P:diaminopimelate biosynthetic process"/>
    <property type="evidence" value="ECO:0007669"/>
    <property type="project" value="UniProtKB-UniRule"/>
</dbReference>
<dbReference type="GO" id="GO:0009089">
    <property type="term" value="P:lysine biosynthetic process via diaminopimelate"/>
    <property type="evidence" value="ECO:0007669"/>
    <property type="project" value="UniProtKB-UniRule"/>
</dbReference>
<dbReference type="CDD" id="cd00950">
    <property type="entry name" value="DHDPS"/>
    <property type="match status" value="1"/>
</dbReference>
<dbReference type="Gene3D" id="3.20.20.70">
    <property type="entry name" value="Aldolase class I"/>
    <property type="match status" value="1"/>
</dbReference>
<dbReference type="HAMAP" id="MF_00418">
    <property type="entry name" value="DapA"/>
    <property type="match status" value="1"/>
</dbReference>
<dbReference type="InterPro" id="IPR013785">
    <property type="entry name" value="Aldolase_TIM"/>
</dbReference>
<dbReference type="InterPro" id="IPR005263">
    <property type="entry name" value="DapA"/>
</dbReference>
<dbReference type="InterPro" id="IPR002220">
    <property type="entry name" value="DapA-like"/>
</dbReference>
<dbReference type="InterPro" id="IPR020624">
    <property type="entry name" value="Schiff_base-form_aldolases_CS"/>
</dbReference>
<dbReference type="NCBIfam" id="TIGR00674">
    <property type="entry name" value="dapA"/>
    <property type="match status" value="1"/>
</dbReference>
<dbReference type="PANTHER" id="PTHR12128:SF66">
    <property type="entry name" value="4-HYDROXY-2-OXOGLUTARATE ALDOLASE, MITOCHONDRIAL"/>
    <property type="match status" value="1"/>
</dbReference>
<dbReference type="PANTHER" id="PTHR12128">
    <property type="entry name" value="DIHYDRODIPICOLINATE SYNTHASE"/>
    <property type="match status" value="1"/>
</dbReference>
<dbReference type="Pfam" id="PF00701">
    <property type="entry name" value="DHDPS"/>
    <property type="match status" value="1"/>
</dbReference>
<dbReference type="PIRSF" id="PIRSF001365">
    <property type="entry name" value="DHDPS"/>
    <property type="match status" value="1"/>
</dbReference>
<dbReference type="PRINTS" id="PR00146">
    <property type="entry name" value="DHPICSNTHASE"/>
</dbReference>
<dbReference type="SMART" id="SM01130">
    <property type="entry name" value="DHDPS"/>
    <property type="match status" value="1"/>
</dbReference>
<dbReference type="SUPFAM" id="SSF51569">
    <property type="entry name" value="Aldolase"/>
    <property type="match status" value="1"/>
</dbReference>
<dbReference type="PROSITE" id="PS00665">
    <property type="entry name" value="DHDPS_1"/>
    <property type="match status" value="1"/>
</dbReference>
<accession>Q5V5D4</accession>
<comment type="function">
    <text evidence="1">Catalyzes the condensation of (S)-aspartate-beta-semialdehyde [(S)-ASA] and pyruvate to 4-hydroxy-tetrahydrodipicolinate (HTPA).</text>
</comment>
<comment type="catalytic activity">
    <reaction evidence="1">
        <text>L-aspartate 4-semialdehyde + pyruvate = (2S,4S)-4-hydroxy-2,3,4,5-tetrahydrodipicolinate + H2O + H(+)</text>
        <dbReference type="Rhea" id="RHEA:34171"/>
        <dbReference type="ChEBI" id="CHEBI:15361"/>
        <dbReference type="ChEBI" id="CHEBI:15377"/>
        <dbReference type="ChEBI" id="CHEBI:15378"/>
        <dbReference type="ChEBI" id="CHEBI:67139"/>
        <dbReference type="ChEBI" id="CHEBI:537519"/>
        <dbReference type="EC" id="4.3.3.7"/>
    </reaction>
</comment>
<comment type="pathway">
    <text evidence="1">Amino-acid biosynthesis; L-lysine biosynthesis via DAP pathway; (S)-tetrahydrodipicolinate from L-aspartate: step 3/4.</text>
</comment>
<comment type="subunit">
    <text evidence="1">Homotetramer; dimer of dimers.</text>
</comment>
<comment type="subcellular location">
    <subcellularLocation>
        <location evidence="1">Cytoplasm</location>
    </subcellularLocation>
</comment>
<comment type="similarity">
    <text evidence="1">Belongs to the DapA family.</text>
</comment>
<comment type="caution">
    <text evidence="2">Was originally thought to be a dihydrodipicolinate synthase (DHDPS), catalyzing the condensation of (S)-aspartate-beta-semialdehyde [(S)-ASA] and pyruvate to dihydrodipicolinate (DHDP). However, it was shown in E.coli that the product of the enzymatic reaction is not dihydrodipicolinate but in fact (4S)-4-hydroxy-2,3,4,5-tetrahydro-(2S)-dipicolinic acid (HTPA), and that the consecutive dehydration reaction leading to DHDP is not spontaneous but catalyzed by DapB.</text>
</comment>
<name>DAPA_HALMA</name>
<reference key="1">
    <citation type="journal article" date="2004" name="Genome Res.">
        <title>Genome sequence of Haloarcula marismortui: a halophilic archaeon from the Dead Sea.</title>
        <authorList>
            <person name="Baliga N.S."/>
            <person name="Bonneau R."/>
            <person name="Facciotti M.T."/>
            <person name="Pan M."/>
            <person name="Glusman G."/>
            <person name="Deutsch E.W."/>
            <person name="Shannon P."/>
            <person name="Chiu Y."/>
            <person name="Weng R.S."/>
            <person name="Gan R.R."/>
            <person name="Hung P."/>
            <person name="Date S.V."/>
            <person name="Marcotte E."/>
            <person name="Hood L."/>
            <person name="Ng W.V."/>
        </authorList>
    </citation>
    <scope>NUCLEOTIDE SEQUENCE [LARGE SCALE GENOMIC DNA]</scope>
    <source>
        <strain>ATCC 43049 / DSM 3752 / JCM 8966 / VKM B-1809</strain>
    </source>
</reference>
<sequence>MTAIDFHGVFPAMCTPFHQDGSIDFETLRDDAQRLESAGVDGLVPVGSTGESATLSHDEHIEVVEAVIDAVDDVPVIAGSGSNNTKEALELSRRSAEAGADALLLISPYYNKPEQQGFIDHYTTLADAVDLPQIVYNVPSRTGQNIEPDTAAELASHPNIRAYKAASGDMNQISEIIERTRDEDFAVLSGDDGMTLPMLSVGGTGCISVSANIEPERTCAMVGAALSGDFERAQAIHHELGPLFRAMFVETNPIPVKEAMRIRGYGPAHLRSPLTRLSDEHLDHLRDVLATLETEDLEDEYAEAER</sequence>
<gene>
    <name evidence="1" type="primary">dapA</name>
    <name type="ordered locus">rrnAC0207</name>
</gene>
<feature type="chain" id="PRO_0000103194" description="4-hydroxy-tetrahydrodipicolinate synthase">
    <location>
        <begin position="1"/>
        <end position="306"/>
    </location>
</feature>
<feature type="active site" description="Proton donor/acceptor" evidence="1">
    <location>
        <position position="136"/>
    </location>
</feature>
<feature type="active site" description="Schiff-base intermediate with substrate" evidence="1">
    <location>
        <position position="164"/>
    </location>
</feature>
<feature type="binding site" evidence="1">
    <location>
        <position position="49"/>
    </location>
    <ligand>
        <name>pyruvate</name>
        <dbReference type="ChEBI" id="CHEBI:15361"/>
    </ligand>
</feature>
<feature type="binding site" evidence="1">
    <location>
        <position position="207"/>
    </location>
    <ligand>
        <name>pyruvate</name>
        <dbReference type="ChEBI" id="CHEBI:15361"/>
    </ligand>
</feature>
<feature type="site" description="Part of a proton relay during catalysis" evidence="1">
    <location>
        <position position="48"/>
    </location>
</feature>
<feature type="site" description="Part of a proton relay during catalysis" evidence="1">
    <location>
        <position position="110"/>
    </location>
</feature>
<organism>
    <name type="scientific">Haloarcula marismortui (strain ATCC 43049 / DSM 3752 / JCM 8966 / VKM B-1809)</name>
    <name type="common">Halobacterium marismortui</name>
    <dbReference type="NCBI Taxonomy" id="272569"/>
    <lineage>
        <taxon>Archaea</taxon>
        <taxon>Methanobacteriati</taxon>
        <taxon>Methanobacteriota</taxon>
        <taxon>Stenosarchaea group</taxon>
        <taxon>Halobacteria</taxon>
        <taxon>Halobacteriales</taxon>
        <taxon>Haloarculaceae</taxon>
        <taxon>Haloarcula</taxon>
    </lineage>
</organism>
<proteinExistence type="inferred from homology"/>
<evidence type="ECO:0000255" key="1">
    <source>
        <dbReference type="HAMAP-Rule" id="MF_00418"/>
    </source>
</evidence>
<evidence type="ECO:0000305" key="2"/>
<protein>
    <recommendedName>
        <fullName evidence="1">4-hydroxy-tetrahydrodipicolinate synthase</fullName>
        <shortName evidence="1">HTPA synthase</shortName>
        <ecNumber evidence="1">4.3.3.7</ecNumber>
    </recommendedName>
</protein>
<keyword id="KW-0028">Amino-acid biosynthesis</keyword>
<keyword id="KW-0963">Cytoplasm</keyword>
<keyword id="KW-0220">Diaminopimelate biosynthesis</keyword>
<keyword id="KW-0456">Lyase</keyword>
<keyword id="KW-0457">Lysine biosynthesis</keyword>
<keyword id="KW-1185">Reference proteome</keyword>
<keyword id="KW-0704">Schiff base</keyword>